<evidence type="ECO:0000255" key="1">
    <source>
        <dbReference type="HAMAP-Rule" id="MF_01824"/>
    </source>
</evidence>
<keyword id="KW-0456">Lyase</keyword>
<keyword id="KW-0663">Pyridoxal phosphate</keyword>
<keyword id="KW-0704">Schiff base</keyword>
<accession>Q73FJ5</accession>
<reference key="1">
    <citation type="journal article" date="2004" name="Nucleic Acids Res.">
        <title>The genome sequence of Bacillus cereus ATCC 10987 reveals metabolic adaptations and a large plasmid related to Bacillus anthracis pXO1.</title>
        <authorList>
            <person name="Rasko D.A."/>
            <person name="Ravel J."/>
            <person name="Oekstad O.A."/>
            <person name="Helgason E."/>
            <person name="Cer R.Z."/>
            <person name="Jiang L."/>
            <person name="Shores K.A."/>
            <person name="Fouts D.E."/>
            <person name="Tourasse N.J."/>
            <person name="Angiuoli S.V."/>
            <person name="Kolonay J.F."/>
            <person name="Nelson W.C."/>
            <person name="Kolstoe A.-B."/>
            <person name="Fraser C.M."/>
            <person name="Read T.D."/>
        </authorList>
    </citation>
    <scope>NUCLEOTIDE SEQUENCE [LARGE SCALE GENOMIC DNA]</scope>
    <source>
        <strain>ATCC 10987 / NRS 248</strain>
    </source>
</reference>
<organism>
    <name type="scientific">Bacillus cereus (strain ATCC 10987 / NRS 248)</name>
    <dbReference type="NCBI Taxonomy" id="222523"/>
    <lineage>
        <taxon>Bacteria</taxon>
        <taxon>Bacillati</taxon>
        <taxon>Bacillota</taxon>
        <taxon>Bacilli</taxon>
        <taxon>Bacillales</taxon>
        <taxon>Bacillaceae</taxon>
        <taxon>Bacillus</taxon>
        <taxon>Bacillus cereus group</taxon>
    </lineage>
</organism>
<dbReference type="EC" id="4.3.3.6" evidence="1"/>
<dbReference type="EMBL" id="AE017194">
    <property type="protein sequence ID" value="AAS38947.1"/>
    <property type="molecule type" value="Genomic_DNA"/>
</dbReference>
<dbReference type="SMR" id="Q73FJ5"/>
<dbReference type="KEGG" id="bca:BCE_0011"/>
<dbReference type="HOGENOM" id="CLU_055352_1_0_9"/>
<dbReference type="UniPathway" id="UPA00245"/>
<dbReference type="Proteomes" id="UP000002527">
    <property type="component" value="Chromosome"/>
</dbReference>
<dbReference type="GO" id="GO:0036381">
    <property type="term" value="F:pyridoxal 5'-phosphate synthase (glutamine hydrolysing) activity"/>
    <property type="evidence" value="ECO:0007669"/>
    <property type="project" value="UniProtKB-UniRule"/>
</dbReference>
<dbReference type="GO" id="GO:0006520">
    <property type="term" value="P:amino acid metabolic process"/>
    <property type="evidence" value="ECO:0007669"/>
    <property type="project" value="TreeGrafter"/>
</dbReference>
<dbReference type="GO" id="GO:0042823">
    <property type="term" value="P:pyridoxal phosphate biosynthetic process"/>
    <property type="evidence" value="ECO:0007669"/>
    <property type="project" value="UniProtKB-UniRule"/>
</dbReference>
<dbReference type="GO" id="GO:0008615">
    <property type="term" value="P:pyridoxine biosynthetic process"/>
    <property type="evidence" value="ECO:0007669"/>
    <property type="project" value="TreeGrafter"/>
</dbReference>
<dbReference type="CDD" id="cd04727">
    <property type="entry name" value="pdxS"/>
    <property type="match status" value="1"/>
</dbReference>
<dbReference type="FunFam" id="3.20.20.70:FF:000001">
    <property type="entry name" value="Pyridoxine biosynthesis protein PDX1"/>
    <property type="match status" value="1"/>
</dbReference>
<dbReference type="Gene3D" id="3.20.20.70">
    <property type="entry name" value="Aldolase class I"/>
    <property type="match status" value="1"/>
</dbReference>
<dbReference type="HAMAP" id="MF_01824">
    <property type="entry name" value="PdxS"/>
    <property type="match status" value="1"/>
</dbReference>
<dbReference type="InterPro" id="IPR013785">
    <property type="entry name" value="Aldolase_TIM"/>
</dbReference>
<dbReference type="InterPro" id="IPR001852">
    <property type="entry name" value="PdxS/SNZ"/>
</dbReference>
<dbReference type="InterPro" id="IPR033755">
    <property type="entry name" value="PdxS/SNZ_N"/>
</dbReference>
<dbReference type="InterPro" id="IPR011060">
    <property type="entry name" value="RibuloseP-bd_barrel"/>
</dbReference>
<dbReference type="NCBIfam" id="NF003215">
    <property type="entry name" value="PRK04180.1"/>
    <property type="match status" value="1"/>
</dbReference>
<dbReference type="NCBIfam" id="TIGR00343">
    <property type="entry name" value="pyridoxal 5'-phosphate synthase lyase subunit PdxS"/>
    <property type="match status" value="1"/>
</dbReference>
<dbReference type="PANTHER" id="PTHR31829">
    <property type="entry name" value="PYRIDOXAL 5'-PHOSPHATE SYNTHASE SUBUNIT SNZ1-RELATED"/>
    <property type="match status" value="1"/>
</dbReference>
<dbReference type="PANTHER" id="PTHR31829:SF0">
    <property type="entry name" value="PYRIDOXAL 5'-PHOSPHATE SYNTHASE SUBUNIT SNZ1-RELATED"/>
    <property type="match status" value="1"/>
</dbReference>
<dbReference type="Pfam" id="PF01680">
    <property type="entry name" value="SOR_SNZ"/>
    <property type="match status" value="1"/>
</dbReference>
<dbReference type="PIRSF" id="PIRSF029271">
    <property type="entry name" value="Pdx1"/>
    <property type="match status" value="1"/>
</dbReference>
<dbReference type="SUPFAM" id="SSF51366">
    <property type="entry name" value="Ribulose-phoshate binding barrel"/>
    <property type="match status" value="1"/>
</dbReference>
<dbReference type="PROSITE" id="PS01235">
    <property type="entry name" value="PDXS_SNZ_1"/>
    <property type="match status" value="1"/>
</dbReference>
<dbReference type="PROSITE" id="PS51129">
    <property type="entry name" value="PDXS_SNZ_2"/>
    <property type="match status" value="1"/>
</dbReference>
<proteinExistence type="inferred from homology"/>
<name>PDXS_BACC1</name>
<comment type="function">
    <text evidence="1">Catalyzes the formation of pyridoxal 5'-phosphate from ribose 5-phosphate (RBP), glyceraldehyde 3-phosphate (G3P) and ammonia. The ammonia is provided by the PdxT subunit. Can also use ribulose 5-phosphate and dihydroxyacetone phosphate as substrates, resulting from enzyme-catalyzed isomerization of RBP and G3P, respectively.</text>
</comment>
<comment type="catalytic activity">
    <reaction evidence="1">
        <text>aldehydo-D-ribose 5-phosphate + D-glyceraldehyde 3-phosphate + L-glutamine = pyridoxal 5'-phosphate + L-glutamate + phosphate + 3 H2O + H(+)</text>
        <dbReference type="Rhea" id="RHEA:31507"/>
        <dbReference type="ChEBI" id="CHEBI:15377"/>
        <dbReference type="ChEBI" id="CHEBI:15378"/>
        <dbReference type="ChEBI" id="CHEBI:29985"/>
        <dbReference type="ChEBI" id="CHEBI:43474"/>
        <dbReference type="ChEBI" id="CHEBI:58273"/>
        <dbReference type="ChEBI" id="CHEBI:58359"/>
        <dbReference type="ChEBI" id="CHEBI:59776"/>
        <dbReference type="ChEBI" id="CHEBI:597326"/>
        <dbReference type="EC" id="4.3.3.6"/>
    </reaction>
</comment>
<comment type="pathway">
    <text evidence="1">Cofactor biosynthesis; pyridoxal 5'-phosphate biosynthesis.</text>
</comment>
<comment type="subunit">
    <text evidence="1">In the presence of PdxT, forms a dodecamer of heterodimers.</text>
</comment>
<comment type="similarity">
    <text evidence="1">Belongs to the PdxS/SNZ family.</text>
</comment>
<feature type="chain" id="PRO_0000109375" description="Pyridoxal 5'-phosphate synthase subunit PdxS">
    <location>
        <begin position="1"/>
        <end position="295"/>
    </location>
</feature>
<feature type="active site" description="Schiff-base intermediate with D-ribose 5-phosphate" evidence="1">
    <location>
        <position position="82"/>
    </location>
</feature>
<feature type="binding site" evidence="1">
    <location>
        <position position="25"/>
    </location>
    <ligand>
        <name>D-ribose 5-phosphate</name>
        <dbReference type="ChEBI" id="CHEBI:78346"/>
    </ligand>
</feature>
<feature type="binding site" evidence="1">
    <location>
        <position position="154"/>
    </location>
    <ligand>
        <name>D-ribose 5-phosphate</name>
        <dbReference type="ChEBI" id="CHEBI:78346"/>
    </ligand>
</feature>
<feature type="binding site" evidence="1">
    <location>
        <position position="166"/>
    </location>
    <ligand>
        <name>D-glyceraldehyde 3-phosphate</name>
        <dbReference type="ChEBI" id="CHEBI:59776"/>
    </ligand>
</feature>
<feature type="binding site" evidence="1">
    <location>
        <position position="215"/>
    </location>
    <ligand>
        <name>D-ribose 5-phosphate</name>
        <dbReference type="ChEBI" id="CHEBI:78346"/>
    </ligand>
</feature>
<feature type="binding site" evidence="1">
    <location>
        <begin position="236"/>
        <end position="237"/>
    </location>
    <ligand>
        <name>D-ribose 5-phosphate</name>
        <dbReference type="ChEBI" id="CHEBI:78346"/>
    </ligand>
</feature>
<protein>
    <recommendedName>
        <fullName evidence="1">Pyridoxal 5'-phosphate synthase subunit PdxS</fullName>
        <shortName evidence="1">PLP synthase subunit PdxS</shortName>
        <ecNumber evidence="1">4.3.3.6</ecNumber>
    </recommendedName>
    <alternativeName>
        <fullName evidence="1">Pdx1</fullName>
    </alternativeName>
</protein>
<gene>
    <name evidence="1" type="primary">pdxS</name>
    <name type="ordered locus">BCE_0011</name>
</gene>
<sequence>MTNVTGTERVKRGMAEMQKGGVIMDVINAEQAKIAEEAGAVAVMALERVPADIRAAGGVSRMADPTIVEEVMGAVSIPVMAKCRIGHLVEARVLESLGVDYIDESEVLTPADEVYHLNKRDYTVPFVCGCRDIGEAARRIAEGASMLRTKGEPGTGNIVEAVRHMRQVNAEIRQVASLREDELMTYAKNTGAPYEVLLEIKRLGRLPVVNFAAGGVATPADAALMMQLGADGVFVGSGIFKSENPAKFARAIVEATTHYEDYELIASLSKGLGNAMKGIEISTLLPEQRMQERGW</sequence>